<protein>
    <recommendedName>
        <fullName>Protein-glutamine deamidase Cif</fullName>
        <ecNumber evidence="5">3.5.1.44</ecNumber>
    </recommendedName>
    <alternativeName>
        <fullName evidence="7">Cycle-inhibiting factor homolog</fullName>
        <shortName evidence="6">CHYP</shortName>
    </alternativeName>
</protein>
<gene>
    <name evidence="7" type="primary">cif</name>
    <name evidence="11" type="ordered locus">YPK_1971</name>
</gene>
<comment type="function">
    <text evidence="2 4 5">Protein-glutamine deamidase effector that inhibits the host cell cycle and other key cellular processes such as the actin network and programmed-cell death (PubMed:19308257, PubMed:22691497). Acts by mediating the side chain deamidation of 'Gln-40' of host NEDD8, converting it to glutamate, thereby abolishing the activity of cullin-RING-based E3 ubiquitin-protein ligase complexes (CRL complexes) (PubMed:22691497). Inactivation of CRL complexes prevents ubiquitination and subsequent degradation of the cyclin-dependent kinase inhibitors CDKN1A/p21 and CDKN1B/p27, leading to G1 and G2 cell cycle arrests in host cells (PubMed:19308257). Also able to catalyze deamidation of 'Gln-40' of host ubiquitin in vitro; however, NEDD8 constitutes the preferred substrate in vivo (By similarity).</text>
</comment>
<comment type="catalytic activity">
    <reaction evidence="5">
        <text>L-glutaminyl-[protein] + H2O = L-glutamyl-[protein] + NH4(+)</text>
        <dbReference type="Rhea" id="RHEA:16441"/>
        <dbReference type="Rhea" id="RHEA-COMP:10207"/>
        <dbReference type="Rhea" id="RHEA-COMP:10208"/>
        <dbReference type="ChEBI" id="CHEBI:15377"/>
        <dbReference type="ChEBI" id="CHEBI:28938"/>
        <dbReference type="ChEBI" id="CHEBI:29973"/>
        <dbReference type="ChEBI" id="CHEBI:30011"/>
        <dbReference type="EC" id="3.5.1.44"/>
    </reaction>
    <physiologicalReaction direction="left-to-right" evidence="5">
        <dbReference type="Rhea" id="RHEA:16442"/>
    </physiologicalReaction>
</comment>
<comment type="subcellular location">
    <subcellularLocation>
        <location evidence="1">Secreted</location>
    </subcellularLocation>
    <subcellularLocation>
        <location evidence="1">Host nucleus</location>
    </subcellularLocation>
    <text evidence="1">Secreted via the type III secretion system (T3SS).</text>
</comment>
<comment type="similarity">
    <text evidence="8">Belongs to the Cif family.</text>
</comment>
<sequence>MKISPNTISPSQSDPRMSTNVSQRSRVSGIGVPVSHSINNPSIQHVQDFATLSARSLRANVLLNSDDHSVPIHAKNPSELLEAIDNNISQTAQDWGVSIQEVEVILGSSKRIIEPVCGVTANTIMKLFLDNDIFSYSFEKGQSLSLSQLQERLASLPAHKNFILRVNDGGLGHAYVIDFPATTNPSRDAFLYQSDLGEGVTREVRFEDWMTQKASHPISLDDINTHFIGIAQDQIDLAHIAKLFDVDGNVKMLRADHLISHKTSEFNFQLFEYDLKNLENNMSIIKTHCN</sequence>
<proteinExistence type="evidence at protein level"/>
<feature type="chain" id="PRO_0000453904" description="Protein-glutamine deamidase Cif">
    <location>
        <begin position="1"/>
        <end position="290"/>
    </location>
</feature>
<feature type="region of interest" description="Disordered" evidence="3">
    <location>
        <begin position="1"/>
        <end position="26"/>
    </location>
</feature>
<feature type="active site" evidence="9 10">
    <location>
        <position position="117"/>
    </location>
</feature>
<feature type="active site" evidence="2">
    <location>
        <position position="173"/>
    </location>
</feature>
<feature type="active site" evidence="2">
    <location>
        <position position="193"/>
    </location>
</feature>
<feature type="mutagenesis site" description="Slightly decreased interaction with host NEDD8." evidence="5">
    <original>D</original>
    <variation>R</variation>
    <location>
        <position position="66"/>
    </location>
</feature>
<feature type="mutagenesis site" description="Does not affect interaction with host NEDD8." evidence="5">
    <original>V</original>
    <variation>A</variation>
    <location>
        <position position="104"/>
    </location>
</feature>
<feature type="mutagenesis site" description="Decreased interaction with host NEDD8, leading to reduced ability to mediate deamidation of host NEDD8." evidence="5">
    <original>L</original>
    <variation>E</variation>
    <location>
        <position position="106"/>
    </location>
</feature>
<feature type="mutagenesis site" description="Decreased interaction with host NEDD8." evidence="5">
    <original>V</original>
    <variation>D</variation>
    <location>
        <position position="116"/>
    </location>
</feature>
<feature type="mutagenesis site" description="Impaired ability to mediate deamidation of host NEDD8, leading to decreased ability to inhibit the host cell cycle. Abolished accumulation of the cyclin-dependent kinase inhibitors CDKN1A/p21 and CDKN1B/p27." evidence="4 5">
    <original>C</original>
    <variation>A</variation>
    <variation>S</variation>
    <location>
        <position position="117"/>
    </location>
</feature>
<feature type="mutagenesis site" description="Decreased interaction with host NEDD8." evidence="5">
    <original>G</original>
    <variation>T</variation>
    <location>
        <position position="118"/>
    </location>
</feature>
<feature type="mutagenesis site" description="Does not strongly affect ability to mediate deamidation of host NEDD8." evidence="5">
    <original>D</original>
    <variation>N</variation>
    <location>
        <position position="195"/>
    </location>
</feature>
<feature type="helix" evidence="13">
    <location>
        <begin position="41"/>
        <end position="53"/>
    </location>
</feature>
<feature type="helix" evidence="13">
    <location>
        <begin position="57"/>
        <end position="63"/>
    </location>
</feature>
<feature type="helix" evidence="13">
    <location>
        <begin position="72"/>
        <end position="74"/>
    </location>
</feature>
<feature type="helix" evidence="13">
    <location>
        <begin position="77"/>
        <end position="95"/>
    </location>
</feature>
<feature type="helix" evidence="13">
    <location>
        <begin position="99"/>
        <end position="106"/>
    </location>
</feature>
<feature type="helix" evidence="13">
    <location>
        <begin position="117"/>
        <end position="129"/>
    </location>
</feature>
<feature type="turn" evidence="13">
    <location>
        <begin position="138"/>
        <end position="140"/>
    </location>
</feature>
<feature type="helix" evidence="13">
    <location>
        <begin position="146"/>
        <end position="154"/>
    </location>
</feature>
<feature type="strand" evidence="13">
    <location>
        <begin position="160"/>
        <end position="168"/>
    </location>
</feature>
<feature type="turn" evidence="13">
    <location>
        <begin position="169"/>
        <end position="172"/>
    </location>
</feature>
<feature type="strand" evidence="13">
    <location>
        <begin position="173"/>
        <end position="179"/>
    </location>
</feature>
<feature type="strand" evidence="13">
    <location>
        <begin position="183"/>
        <end position="186"/>
    </location>
</feature>
<feature type="strand" evidence="13">
    <location>
        <begin position="188"/>
        <end position="192"/>
    </location>
</feature>
<feature type="strand" evidence="13">
    <location>
        <begin position="199"/>
        <end position="201"/>
    </location>
</feature>
<feature type="helix" evidence="13">
    <location>
        <begin position="206"/>
        <end position="212"/>
    </location>
</feature>
<feature type="turn" evidence="13">
    <location>
        <begin position="213"/>
        <end position="215"/>
    </location>
</feature>
<feature type="helix" evidence="13">
    <location>
        <begin position="220"/>
        <end position="229"/>
    </location>
</feature>
<feature type="strand" evidence="13">
    <location>
        <begin position="232"/>
        <end position="234"/>
    </location>
</feature>
<feature type="helix" evidence="13">
    <location>
        <begin position="237"/>
        <end position="244"/>
    </location>
</feature>
<feature type="helix" evidence="13">
    <location>
        <begin position="250"/>
        <end position="252"/>
    </location>
</feature>
<feature type="helix" evidence="13">
    <location>
        <begin position="255"/>
        <end position="257"/>
    </location>
</feature>
<feature type="helix" evidence="13">
    <location>
        <begin position="260"/>
        <end position="262"/>
    </location>
</feature>
<feature type="strand" evidence="13">
    <location>
        <begin position="266"/>
        <end position="273"/>
    </location>
</feature>
<feature type="helix" evidence="13">
    <location>
        <begin position="275"/>
        <end position="285"/>
    </location>
</feature>
<accession>A0A0H3B1Q8</accession>
<reference key="1">
    <citation type="submission" date="2008-02" db="EMBL/GenBank/DDBJ databases">
        <title>Complete sequence of Yersinia pseudotuberculosis YPIII.</title>
        <authorList>
            <consortium name="US DOE Joint Genome Institute"/>
            <person name="Copeland A."/>
            <person name="Lucas S."/>
            <person name="Lapidus A."/>
            <person name="Glavina del Rio T."/>
            <person name="Dalin E."/>
            <person name="Tice H."/>
            <person name="Bruce D."/>
            <person name="Goodwin L."/>
            <person name="Pitluck S."/>
            <person name="Munk A.C."/>
            <person name="Brettin T."/>
            <person name="Detter J.C."/>
            <person name="Han C."/>
            <person name="Tapia R."/>
            <person name="Schmutz J."/>
            <person name="Larimer F."/>
            <person name="Land M."/>
            <person name="Hauser L."/>
            <person name="Challacombe J.F."/>
            <person name="Green L."/>
            <person name="Lindler L.E."/>
            <person name="Nikolich M.P."/>
            <person name="Richardson P."/>
        </authorList>
    </citation>
    <scope>NUCLEOTIDE SEQUENCE [LARGE SCALE GENOMIC DNA]</scope>
    <source>
        <strain>YPIII</strain>
    </source>
</reference>
<reference key="2">
    <citation type="journal article" date="2009" name="PLoS ONE">
        <title>Cycle inhibiting factors (CIFs) are a growing family of functional cyclomodulins present in invertebrate and mammal bacterial pathogens.</title>
        <authorList>
            <person name="Jubelin G."/>
            <person name="Chavez C.V."/>
            <person name="Taieb F."/>
            <person name="Banfield M.J."/>
            <person name="Samba-Louaka A."/>
            <person name="Nobe R."/>
            <person name="Nougayrede J.P."/>
            <person name="Zumbihl R."/>
            <person name="Givaudan A."/>
            <person name="Escoubas J.M."/>
            <person name="Oswald E."/>
        </authorList>
    </citation>
    <scope>FUNCTION</scope>
    <scope>ACTIVE SITE</scope>
    <scope>MUTAGENESIS OF CYS-117</scope>
</reference>
<reference key="3">
    <citation type="journal article" date="2009" name="Proc. Natl. Acad. Sci. U.S.A.">
        <title>A bacterial type III effector family uses the papain-like hydrolytic activity to arrest the host cell cycle.</title>
        <authorList>
            <person name="Yao Q."/>
            <person name="Cui J."/>
            <person name="Zhu Y."/>
            <person name="Wang G."/>
            <person name="Hu L."/>
            <person name="Long C."/>
            <person name="Cao R."/>
            <person name="Liu X."/>
            <person name="Huang N."/>
            <person name="Chen S."/>
            <person name="Liu L."/>
            <person name="Shao F."/>
        </authorList>
    </citation>
    <scope>IDENTIFICATION</scope>
</reference>
<reference evidence="12" key="4">
    <citation type="journal article" date="2012" name="Proc. Natl. Acad. Sci. U.S.A.">
        <title>The molecular basis of ubiquitin-like protein NEDD8 deamidation by the bacterial effector protein Cif.</title>
        <authorList>
            <person name="Crow A."/>
            <person name="Hughes R.K."/>
            <person name="Taieb F."/>
            <person name="Oswald E."/>
            <person name="Banfield M.J."/>
        </authorList>
    </citation>
    <scope>X-RAY CRYSTALLOGRAPHY (1.95 ANGSTROMS) OF 33-288 IN COMPLEX WITH HOST NEDD8</scope>
    <scope>FUNCTION</scope>
    <scope>CATALYTIC ACTIVITY</scope>
    <scope>ACTIVE SITE</scope>
    <scope>MUTAGENESIS OF ASP-66; VAL-104; LEU-106; VAL-116; CYS-117; GLY-118 AND ASP-195</scope>
</reference>
<name>CIF_YERPY</name>
<evidence type="ECO:0000250" key="1">
    <source>
        <dbReference type="UniProtKB" id="P0DUW5"/>
    </source>
</evidence>
<evidence type="ECO:0000250" key="2">
    <source>
        <dbReference type="UniProtKB" id="Q63KH5"/>
    </source>
</evidence>
<evidence type="ECO:0000256" key="3">
    <source>
        <dbReference type="SAM" id="MobiDB-lite"/>
    </source>
</evidence>
<evidence type="ECO:0000269" key="4">
    <source>
    </source>
</evidence>
<evidence type="ECO:0000269" key="5">
    <source>
    </source>
</evidence>
<evidence type="ECO:0000303" key="6">
    <source>
    </source>
</evidence>
<evidence type="ECO:0000303" key="7">
    <source>
    </source>
</evidence>
<evidence type="ECO:0000305" key="8"/>
<evidence type="ECO:0000305" key="9">
    <source>
    </source>
</evidence>
<evidence type="ECO:0000305" key="10">
    <source>
    </source>
</evidence>
<evidence type="ECO:0000312" key="11">
    <source>
        <dbReference type="EMBL" id="ACA68260.1"/>
    </source>
</evidence>
<evidence type="ECO:0007744" key="12">
    <source>
        <dbReference type="PDB" id="4F8C"/>
    </source>
</evidence>
<evidence type="ECO:0007829" key="13">
    <source>
        <dbReference type="PDB" id="4F8C"/>
    </source>
</evidence>
<organism>
    <name type="scientific">Yersinia pseudotuberculosis serotype O:3 (strain YPIII)</name>
    <dbReference type="NCBI Taxonomy" id="502800"/>
    <lineage>
        <taxon>Bacteria</taxon>
        <taxon>Pseudomonadati</taxon>
        <taxon>Pseudomonadota</taxon>
        <taxon>Gammaproteobacteria</taxon>
        <taxon>Enterobacterales</taxon>
        <taxon>Yersiniaceae</taxon>
        <taxon>Yersinia</taxon>
    </lineage>
</organism>
<keyword id="KW-0002">3D-structure</keyword>
<keyword id="KW-1048">Host nucleus</keyword>
<keyword id="KW-0378">Hydrolase</keyword>
<keyword id="KW-0964">Secreted</keyword>
<keyword id="KW-0800">Toxin</keyword>
<keyword id="KW-0843">Virulence</keyword>
<dbReference type="EC" id="3.5.1.44" evidence="5"/>
<dbReference type="EMBL" id="CP000950">
    <property type="protein sequence ID" value="ACA68260.1"/>
    <property type="molecule type" value="Genomic_DNA"/>
</dbReference>
<dbReference type="PDB" id="4F8C">
    <property type="method" value="X-ray"/>
    <property type="resolution" value="1.95 A"/>
    <property type="chains" value="A/C=33-288"/>
</dbReference>
<dbReference type="PDBsum" id="4F8C"/>
<dbReference type="SMR" id="A0A0H3B1Q8"/>
<dbReference type="KEGG" id="ypy:YPK_1971"/>
<dbReference type="PATRIC" id="fig|502800.11.peg.2643"/>
<dbReference type="EvolutionaryTrace" id="A0A0H3B1Q8"/>
<dbReference type="GO" id="GO:0005576">
    <property type="term" value="C:extracellular region"/>
    <property type="evidence" value="ECO:0007669"/>
    <property type="project" value="UniProtKB-SubCell"/>
</dbReference>
<dbReference type="GO" id="GO:0042025">
    <property type="term" value="C:host cell nucleus"/>
    <property type="evidence" value="ECO:0000250"/>
    <property type="project" value="UniProtKB"/>
</dbReference>
<dbReference type="GO" id="GO:0016787">
    <property type="term" value="F:hydrolase activity"/>
    <property type="evidence" value="ECO:0007669"/>
    <property type="project" value="UniProtKB-KW"/>
</dbReference>
<dbReference type="GO" id="GO:0090729">
    <property type="term" value="F:toxin activity"/>
    <property type="evidence" value="ECO:0000314"/>
    <property type="project" value="UniProtKB"/>
</dbReference>
<dbReference type="GO" id="GO:0044071">
    <property type="term" value="P:symbiont-mediated perturbation of host cell cycle progression"/>
    <property type="evidence" value="ECO:0000314"/>
    <property type="project" value="UniProtKB"/>
</dbReference>
<dbReference type="InterPro" id="IPR032278">
    <property type="entry name" value="Cif"/>
</dbReference>
<dbReference type="Pfam" id="PF16374">
    <property type="entry name" value="CIF"/>
    <property type="match status" value="1"/>
</dbReference>